<gene>
    <name evidence="1" type="primary">fabZ</name>
    <name type="ordered locus">SPs0346</name>
</gene>
<keyword id="KW-0963">Cytoplasm</keyword>
<keyword id="KW-0441">Lipid A biosynthesis</keyword>
<keyword id="KW-0444">Lipid biosynthesis</keyword>
<keyword id="KW-0443">Lipid metabolism</keyword>
<keyword id="KW-0456">Lyase</keyword>
<comment type="function">
    <text evidence="1">Involved in unsaturated fatty acids biosynthesis. Catalyzes the dehydration of short chain beta-hydroxyacyl-ACPs and long chain saturated and unsaturated beta-hydroxyacyl-ACPs.</text>
</comment>
<comment type="catalytic activity">
    <reaction evidence="1">
        <text>a (3R)-hydroxyacyl-[ACP] = a (2E)-enoyl-[ACP] + H2O</text>
        <dbReference type="Rhea" id="RHEA:13097"/>
        <dbReference type="Rhea" id="RHEA-COMP:9925"/>
        <dbReference type="Rhea" id="RHEA-COMP:9945"/>
        <dbReference type="ChEBI" id="CHEBI:15377"/>
        <dbReference type="ChEBI" id="CHEBI:78784"/>
        <dbReference type="ChEBI" id="CHEBI:78827"/>
        <dbReference type="EC" id="4.2.1.59"/>
    </reaction>
</comment>
<comment type="subcellular location">
    <subcellularLocation>
        <location evidence="1">Cytoplasm</location>
    </subcellularLocation>
</comment>
<comment type="similarity">
    <text evidence="1">Belongs to the thioester dehydratase family. FabZ subfamily.</text>
</comment>
<comment type="sequence caution" evidence="2">
    <conflict type="erroneous initiation">
        <sequence resource="EMBL-CDS" id="BAC63441"/>
    </conflict>
</comment>
<dbReference type="EC" id="4.2.1.59" evidence="1"/>
<dbReference type="EMBL" id="BA000034">
    <property type="protein sequence ID" value="BAC63441.1"/>
    <property type="status" value="ALT_INIT"/>
    <property type="molecule type" value="Genomic_DNA"/>
</dbReference>
<dbReference type="SMR" id="P0DB03"/>
<dbReference type="KEGG" id="sps:SPs0346"/>
<dbReference type="HOGENOM" id="CLU_078912_3_0_9"/>
<dbReference type="GO" id="GO:0005737">
    <property type="term" value="C:cytoplasm"/>
    <property type="evidence" value="ECO:0007669"/>
    <property type="project" value="UniProtKB-SubCell"/>
</dbReference>
<dbReference type="GO" id="GO:0016020">
    <property type="term" value="C:membrane"/>
    <property type="evidence" value="ECO:0007669"/>
    <property type="project" value="GOC"/>
</dbReference>
<dbReference type="GO" id="GO:0019171">
    <property type="term" value="F:(3R)-hydroxyacyl-[acyl-carrier-protein] dehydratase activity"/>
    <property type="evidence" value="ECO:0007669"/>
    <property type="project" value="UniProtKB-EC"/>
</dbReference>
<dbReference type="GO" id="GO:0006633">
    <property type="term" value="P:fatty acid biosynthetic process"/>
    <property type="evidence" value="ECO:0007669"/>
    <property type="project" value="UniProtKB-UniRule"/>
</dbReference>
<dbReference type="GO" id="GO:0009245">
    <property type="term" value="P:lipid A biosynthetic process"/>
    <property type="evidence" value="ECO:0007669"/>
    <property type="project" value="UniProtKB-UniRule"/>
</dbReference>
<dbReference type="CDD" id="cd01288">
    <property type="entry name" value="FabZ"/>
    <property type="match status" value="1"/>
</dbReference>
<dbReference type="FunFam" id="3.10.129.10:FF:000001">
    <property type="entry name" value="3-hydroxyacyl-[acyl-carrier-protein] dehydratase FabZ"/>
    <property type="match status" value="1"/>
</dbReference>
<dbReference type="Gene3D" id="3.10.129.10">
    <property type="entry name" value="Hotdog Thioesterase"/>
    <property type="match status" value="1"/>
</dbReference>
<dbReference type="HAMAP" id="MF_00406">
    <property type="entry name" value="FabZ"/>
    <property type="match status" value="1"/>
</dbReference>
<dbReference type="InterPro" id="IPR013114">
    <property type="entry name" value="FabA_FabZ"/>
</dbReference>
<dbReference type="InterPro" id="IPR010084">
    <property type="entry name" value="FabZ"/>
</dbReference>
<dbReference type="InterPro" id="IPR029069">
    <property type="entry name" value="HotDog_dom_sf"/>
</dbReference>
<dbReference type="NCBIfam" id="TIGR01750">
    <property type="entry name" value="fabZ"/>
    <property type="match status" value="1"/>
</dbReference>
<dbReference type="NCBIfam" id="NF000582">
    <property type="entry name" value="PRK00006.1"/>
    <property type="match status" value="1"/>
</dbReference>
<dbReference type="PANTHER" id="PTHR30272">
    <property type="entry name" value="3-HYDROXYACYL-[ACYL-CARRIER-PROTEIN] DEHYDRATASE"/>
    <property type="match status" value="1"/>
</dbReference>
<dbReference type="PANTHER" id="PTHR30272:SF1">
    <property type="entry name" value="3-HYDROXYACYL-[ACYL-CARRIER-PROTEIN] DEHYDRATASE"/>
    <property type="match status" value="1"/>
</dbReference>
<dbReference type="Pfam" id="PF07977">
    <property type="entry name" value="FabA"/>
    <property type="match status" value="1"/>
</dbReference>
<dbReference type="SUPFAM" id="SSF54637">
    <property type="entry name" value="Thioesterase/thiol ester dehydrase-isomerase"/>
    <property type="match status" value="1"/>
</dbReference>
<organism>
    <name type="scientific">Streptococcus pyogenes serotype M3 (strain SSI-1)</name>
    <dbReference type="NCBI Taxonomy" id="193567"/>
    <lineage>
        <taxon>Bacteria</taxon>
        <taxon>Bacillati</taxon>
        <taxon>Bacillota</taxon>
        <taxon>Bacilli</taxon>
        <taxon>Lactobacillales</taxon>
        <taxon>Streptococcaceae</taxon>
        <taxon>Streptococcus</taxon>
    </lineage>
</organism>
<protein>
    <recommendedName>
        <fullName evidence="1">3-hydroxyacyl-[acyl-carrier-protein] dehydratase FabZ</fullName>
        <ecNumber evidence="1">4.2.1.59</ecNumber>
    </recommendedName>
    <alternativeName>
        <fullName evidence="1">(3R)-hydroxymyristoyl-[acyl-carrier-protein] dehydratase</fullName>
        <shortName evidence="1">(3R)-hydroxymyristoyl-ACP dehydrase</shortName>
    </alternativeName>
    <alternativeName>
        <fullName evidence="1">Beta-hydroxyacyl-ACP dehydratase</fullName>
    </alternativeName>
</protein>
<accession>P0DB03</accession>
<accession>Q8K631</accession>
<evidence type="ECO:0000255" key="1">
    <source>
        <dbReference type="HAMAP-Rule" id="MF_00406"/>
    </source>
</evidence>
<evidence type="ECO:0000305" key="2"/>
<feature type="chain" id="PRO_0000411339" description="3-hydroxyacyl-[acyl-carrier-protein] dehydratase FabZ">
    <location>
        <begin position="1"/>
        <end position="139"/>
    </location>
</feature>
<feature type="active site" evidence="1">
    <location>
        <position position="46"/>
    </location>
</feature>
<name>FABZ_STRPQ</name>
<sequence>MDIREIQAALPHRYPMLLVDRVLEVSDDHIVAIKNVTINEPFFNGHFPHYPVMPGVLIMEALAQTAGVLELSKEENKSKLVFYAGMDKVKFKKQVVPGDQLVMTATFIKRRGTIAVVEARAEVDGKLAASGTLTFACGQ</sequence>
<reference key="1">
    <citation type="journal article" date="2003" name="Genome Res.">
        <title>Genome sequence of an M3 strain of Streptococcus pyogenes reveals a large-scale genomic rearrangement in invasive strains and new insights into phage evolution.</title>
        <authorList>
            <person name="Nakagawa I."/>
            <person name="Kurokawa K."/>
            <person name="Yamashita A."/>
            <person name="Nakata M."/>
            <person name="Tomiyasu Y."/>
            <person name="Okahashi N."/>
            <person name="Kawabata S."/>
            <person name="Yamazaki K."/>
            <person name="Shiba T."/>
            <person name="Yasunaga T."/>
            <person name="Hayashi H."/>
            <person name="Hattori M."/>
            <person name="Hamada S."/>
        </authorList>
    </citation>
    <scope>NUCLEOTIDE SEQUENCE [LARGE SCALE GENOMIC DNA]</scope>
    <source>
        <strain>SSI-1</strain>
    </source>
</reference>
<proteinExistence type="inferred from homology"/>